<evidence type="ECO:0000255" key="1">
    <source>
        <dbReference type="HAMAP-Rule" id="MF_01333"/>
    </source>
</evidence>
<evidence type="ECO:0000305" key="2"/>
<reference key="1">
    <citation type="submission" date="2006-08" db="EMBL/GenBank/DDBJ databases">
        <title>Complete sequence of Shewanella frigidimarina NCIMB 400.</title>
        <authorList>
            <consortium name="US DOE Joint Genome Institute"/>
            <person name="Copeland A."/>
            <person name="Lucas S."/>
            <person name="Lapidus A."/>
            <person name="Barry K."/>
            <person name="Detter J.C."/>
            <person name="Glavina del Rio T."/>
            <person name="Hammon N."/>
            <person name="Israni S."/>
            <person name="Dalin E."/>
            <person name="Tice H."/>
            <person name="Pitluck S."/>
            <person name="Fredrickson J.K."/>
            <person name="Kolker E."/>
            <person name="McCuel L.A."/>
            <person name="DiChristina T."/>
            <person name="Nealson K.H."/>
            <person name="Newman D."/>
            <person name="Tiedje J.M."/>
            <person name="Zhou J."/>
            <person name="Romine M.F."/>
            <person name="Culley D.E."/>
            <person name="Serres M."/>
            <person name="Chertkov O."/>
            <person name="Brettin T."/>
            <person name="Bruce D."/>
            <person name="Han C."/>
            <person name="Tapia R."/>
            <person name="Gilna P."/>
            <person name="Schmutz J."/>
            <person name="Larimer F."/>
            <person name="Land M."/>
            <person name="Hauser L."/>
            <person name="Kyrpides N."/>
            <person name="Mikhailova N."/>
            <person name="Richardson P."/>
        </authorList>
    </citation>
    <scope>NUCLEOTIDE SEQUENCE [LARGE SCALE GENOMIC DNA]</scope>
    <source>
        <strain>NCIMB 400</strain>
    </source>
</reference>
<proteinExistence type="inferred from homology"/>
<dbReference type="EMBL" id="CP000447">
    <property type="protein sequence ID" value="ABI70023.1"/>
    <property type="molecule type" value="Genomic_DNA"/>
</dbReference>
<dbReference type="RefSeq" id="WP_011635651.1">
    <property type="nucleotide sequence ID" value="NC_008345.1"/>
</dbReference>
<dbReference type="SMR" id="Q089P2"/>
<dbReference type="STRING" id="318167.Sfri_0160"/>
<dbReference type="GeneID" id="90572195"/>
<dbReference type="KEGG" id="sfr:Sfri_0160"/>
<dbReference type="eggNOG" id="COG0094">
    <property type="taxonomic scope" value="Bacteria"/>
</dbReference>
<dbReference type="HOGENOM" id="CLU_061015_2_1_6"/>
<dbReference type="OrthoDB" id="9806626at2"/>
<dbReference type="Proteomes" id="UP000000684">
    <property type="component" value="Chromosome"/>
</dbReference>
<dbReference type="GO" id="GO:1990904">
    <property type="term" value="C:ribonucleoprotein complex"/>
    <property type="evidence" value="ECO:0007669"/>
    <property type="project" value="UniProtKB-KW"/>
</dbReference>
<dbReference type="GO" id="GO:0005840">
    <property type="term" value="C:ribosome"/>
    <property type="evidence" value="ECO:0007669"/>
    <property type="project" value="UniProtKB-KW"/>
</dbReference>
<dbReference type="GO" id="GO:0019843">
    <property type="term" value="F:rRNA binding"/>
    <property type="evidence" value="ECO:0007669"/>
    <property type="project" value="UniProtKB-UniRule"/>
</dbReference>
<dbReference type="GO" id="GO:0003735">
    <property type="term" value="F:structural constituent of ribosome"/>
    <property type="evidence" value="ECO:0007669"/>
    <property type="project" value="InterPro"/>
</dbReference>
<dbReference type="GO" id="GO:0000049">
    <property type="term" value="F:tRNA binding"/>
    <property type="evidence" value="ECO:0007669"/>
    <property type="project" value="UniProtKB-UniRule"/>
</dbReference>
<dbReference type="GO" id="GO:0006412">
    <property type="term" value="P:translation"/>
    <property type="evidence" value="ECO:0007669"/>
    <property type="project" value="UniProtKB-UniRule"/>
</dbReference>
<dbReference type="FunFam" id="3.30.1440.10:FF:000001">
    <property type="entry name" value="50S ribosomal protein L5"/>
    <property type="match status" value="1"/>
</dbReference>
<dbReference type="Gene3D" id="3.30.1440.10">
    <property type="match status" value="1"/>
</dbReference>
<dbReference type="HAMAP" id="MF_01333_B">
    <property type="entry name" value="Ribosomal_uL5_B"/>
    <property type="match status" value="1"/>
</dbReference>
<dbReference type="InterPro" id="IPR002132">
    <property type="entry name" value="Ribosomal_uL5"/>
</dbReference>
<dbReference type="InterPro" id="IPR020930">
    <property type="entry name" value="Ribosomal_uL5_bac-type"/>
</dbReference>
<dbReference type="InterPro" id="IPR031309">
    <property type="entry name" value="Ribosomal_uL5_C"/>
</dbReference>
<dbReference type="InterPro" id="IPR020929">
    <property type="entry name" value="Ribosomal_uL5_CS"/>
</dbReference>
<dbReference type="InterPro" id="IPR022803">
    <property type="entry name" value="Ribosomal_uL5_dom_sf"/>
</dbReference>
<dbReference type="InterPro" id="IPR031310">
    <property type="entry name" value="Ribosomal_uL5_N"/>
</dbReference>
<dbReference type="NCBIfam" id="NF000585">
    <property type="entry name" value="PRK00010.1"/>
    <property type="match status" value="1"/>
</dbReference>
<dbReference type="PANTHER" id="PTHR11994">
    <property type="entry name" value="60S RIBOSOMAL PROTEIN L11-RELATED"/>
    <property type="match status" value="1"/>
</dbReference>
<dbReference type="Pfam" id="PF00281">
    <property type="entry name" value="Ribosomal_L5"/>
    <property type="match status" value="1"/>
</dbReference>
<dbReference type="Pfam" id="PF00673">
    <property type="entry name" value="Ribosomal_L5_C"/>
    <property type="match status" value="1"/>
</dbReference>
<dbReference type="PIRSF" id="PIRSF002161">
    <property type="entry name" value="Ribosomal_L5"/>
    <property type="match status" value="1"/>
</dbReference>
<dbReference type="SUPFAM" id="SSF55282">
    <property type="entry name" value="RL5-like"/>
    <property type="match status" value="1"/>
</dbReference>
<dbReference type="PROSITE" id="PS00358">
    <property type="entry name" value="RIBOSOMAL_L5"/>
    <property type="match status" value="1"/>
</dbReference>
<feature type="chain" id="PRO_1000052823" description="Large ribosomal subunit protein uL5">
    <location>
        <begin position="1"/>
        <end position="179"/>
    </location>
</feature>
<name>RL5_SHEFN</name>
<accession>Q089P2</accession>
<protein>
    <recommendedName>
        <fullName evidence="1">Large ribosomal subunit protein uL5</fullName>
    </recommendedName>
    <alternativeName>
        <fullName evidence="2">50S ribosomal protein L5</fullName>
    </alternativeName>
</protein>
<comment type="function">
    <text evidence="1">This is one of the proteins that bind and probably mediate the attachment of the 5S RNA into the large ribosomal subunit, where it forms part of the central protuberance. In the 70S ribosome it contacts protein S13 of the 30S subunit (bridge B1b), connecting the 2 subunits; this bridge is implicated in subunit movement. Contacts the P site tRNA; the 5S rRNA and some of its associated proteins might help stabilize positioning of ribosome-bound tRNAs.</text>
</comment>
<comment type="subunit">
    <text evidence="1">Part of the 50S ribosomal subunit; part of the 5S rRNA/L5/L18/L25 subcomplex. Contacts the 5S rRNA and the P site tRNA. Forms a bridge to the 30S subunit in the 70S ribosome.</text>
</comment>
<comment type="similarity">
    <text evidence="1">Belongs to the universal ribosomal protein uL5 family.</text>
</comment>
<gene>
    <name evidence="1" type="primary">rplE</name>
    <name type="ordered locus">Sfri_0160</name>
</gene>
<organism>
    <name type="scientific">Shewanella frigidimarina (strain NCIMB 400)</name>
    <dbReference type="NCBI Taxonomy" id="318167"/>
    <lineage>
        <taxon>Bacteria</taxon>
        <taxon>Pseudomonadati</taxon>
        <taxon>Pseudomonadota</taxon>
        <taxon>Gammaproteobacteria</taxon>
        <taxon>Alteromonadales</taxon>
        <taxon>Shewanellaceae</taxon>
        <taxon>Shewanella</taxon>
    </lineage>
</organism>
<keyword id="KW-1185">Reference proteome</keyword>
<keyword id="KW-0687">Ribonucleoprotein</keyword>
<keyword id="KW-0689">Ribosomal protein</keyword>
<keyword id="KW-0694">RNA-binding</keyword>
<keyword id="KW-0699">rRNA-binding</keyword>
<keyword id="KW-0820">tRNA-binding</keyword>
<sequence>MAKLHDKYQETVVAELAKKFGYSSVMQVPRIEKITLNMGVGEAVADKKVMEHALRDMTAIAGQKPIVTVARKSVAGFKIREGYPIGCKVTLRGERMWEFLERLVDIAIPRIRDFRGLSAKAFDGRGNYAMGVREQIIFPEIDYDKIDKIRGMDIVITTTAKNDEEGRALLDAFNFPFKK</sequence>